<keyword id="KW-0067">ATP-binding</keyword>
<keyword id="KW-0418">Kinase</keyword>
<keyword id="KW-0547">Nucleotide-binding</keyword>
<keyword id="KW-1185">Reference proteome</keyword>
<keyword id="KW-0723">Serine/threonine-protein kinase</keyword>
<keyword id="KW-0808">Transferase</keyword>
<feature type="chain" id="PRO_0000086589" description="Serine/threonine-protein kinase PTK1/STK1">
    <location>
        <begin position="1"/>
        <end position="662"/>
    </location>
</feature>
<feature type="domain" description="Protein kinase" evidence="1">
    <location>
        <begin position="196"/>
        <end position="503"/>
    </location>
</feature>
<feature type="region of interest" description="Disordered" evidence="3">
    <location>
        <begin position="35"/>
        <end position="119"/>
    </location>
</feature>
<feature type="region of interest" description="Disordered" evidence="3">
    <location>
        <begin position="605"/>
        <end position="631"/>
    </location>
</feature>
<feature type="compositionally biased region" description="Low complexity" evidence="3">
    <location>
        <begin position="50"/>
        <end position="60"/>
    </location>
</feature>
<feature type="compositionally biased region" description="Polar residues" evidence="3">
    <location>
        <begin position="61"/>
        <end position="91"/>
    </location>
</feature>
<feature type="compositionally biased region" description="Polar residues" evidence="3">
    <location>
        <begin position="98"/>
        <end position="119"/>
    </location>
</feature>
<feature type="active site" description="Proton acceptor" evidence="1 2">
    <location>
        <position position="329"/>
    </location>
</feature>
<feature type="binding site" evidence="1">
    <location>
        <begin position="202"/>
        <end position="210"/>
    </location>
    <ligand>
        <name>ATP</name>
        <dbReference type="ChEBI" id="CHEBI:30616"/>
    </ligand>
</feature>
<feature type="binding site" evidence="1">
    <location>
        <position position="226"/>
    </location>
    <ligand>
        <name>ATP</name>
        <dbReference type="ChEBI" id="CHEBI:30616"/>
    </ligand>
</feature>
<feature type="sequence conflict" description="In Ref. 1; CAA82043." evidence="4" ref="1">
    <original>KRCS</original>
    <variation>NAAP</variation>
    <location>
        <begin position="241"/>
        <end position="244"/>
    </location>
</feature>
<feature type="sequence conflict" description="In Ref. 1; CAA82043." evidence="4" ref="1">
    <original>S</original>
    <variation>H</variation>
    <location>
        <position position="300"/>
    </location>
</feature>
<feature type="sequence conflict" description="In Ref. 1; CAA82043." evidence="4" ref="1">
    <original>TDPHDLSSPVKKCAGMIGSP</original>
    <variation>HGSTRPVQPCQEVRRDDRLA</variation>
    <location>
        <begin position="356"/>
        <end position="375"/>
    </location>
</feature>
<feature type="sequence conflict" description="In Ref. 1; CAA82042." evidence="4" ref="1">
    <original>VHHHLNIVNSLVHSSSAASSQVPAST</original>
    <variation>GASPSEHCQQLGP</variation>
    <location>
        <begin position="637"/>
        <end position="662"/>
    </location>
</feature>
<comment type="function">
    <text>Essential determinant for low-affinity spermidine transport.</text>
</comment>
<comment type="catalytic activity">
    <reaction>
        <text>L-seryl-[protein] + ATP = O-phospho-L-seryl-[protein] + ADP + H(+)</text>
        <dbReference type="Rhea" id="RHEA:17989"/>
        <dbReference type="Rhea" id="RHEA-COMP:9863"/>
        <dbReference type="Rhea" id="RHEA-COMP:11604"/>
        <dbReference type="ChEBI" id="CHEBI:15378"/>
        <dbReference type="ChEBI" id="CHEBI:29999"/>
        <dbReference type="ChEBI" id="CHEBI:30616"/>
        <dbReference type="ChEBI" id="CHEBI:83421"/>
        <dbReference type="ChEBI" id="CHEBI:456216"/>
        <dbReference type="EC" id="2.7.11.1"/>
    </reaction>
</comment>
<comment type="catalytic activity">
    <reaction>
        <text>L-threonyl-[protein] + ATP = O-phospho-L-threonyl-[protein] + ADP + H(+)</text>
        <dbReference type="Rhea" id="RHEA:46608"/>
        <dbReference type="Rhea" id="RHEA-COMP:11060"/>
        <dbReference type="Rhea" id="RHEA-COMP:11605"/>
        <dbReference type="ChEBI" id="CHEBI:15378"/>
        <dbReference type="ChEBI" id="CHEBI:30013"/>
        <dbReference type="ChEBI" id="CHEBI:30616"/>
        <dbReference type="ChEBI" id="CHEBI:61977"/>
        <dbReference type="ChEBI" id="CHEBI:456216"/>
        <dbReference type="EC" id="2.7.11.1"/>
    </reaction>
</comment>
<comment type="similarity">
    <text evidence="1">Belongs to the protein kinase superfamily. Ser/Thr protein kinase family.</text>
</comment>
<comment type="sequence caution" evidence="4">
    <conflict type="frameshift">
        <sequence resource="EMBL-CDS" id="BAA09884"/>
    </conflict>
</comment>
<comment type="sequence caution" evidence="4">
    <conflict type="frameshift">
        <sequence resource="EMBL-CDS" id="CAA82042"/>
    </conflict>
</comment>
<comment type="sequence caution" evidence="4">
    <conflict type="frameshift">
        <sequence resource="EMBL-CDS" id="CAA82043"/>
    </conflict>
</comment>
<organism>
    <name type="scientific">Saccharomyces cerevisiae (strain ATCC 204508 / S288c)</name>
    <name type="common">Baker's yeast</name>
    <dbReference type="NCBI Taxonomy" id="559292"/>
    <lineage>
        <taxon>Eukaryota</taxon>
        <taxon>Fungi</taxon>
        <taxon>Dikarya</taxon>
        <taxon>Ascomycota</taxon>
        <taxon>Saccharomycotina</taxon>
        <taxon>Saccharomycetes</taxon>
        <taxon>Saccharomycetales</taxon>
        <taxon>Saccharomycetaceae</taxon>
        <taxon>Saccharomyces</taxon>
    </lineage>
</organism>
<accession>P36002</accession>
<accession>D6VX02</accession>
<accession>P36045</accession>
<accession>Q06941</accession>
<sequence length="662" mass="73502">MTVSHNHSTKISQQPISSVSAFKFFGKKLLSSSHGNKLKKKASLPPDFHSTSTNDSESSSPKLPNSLKTSRRANSFAHTTNSKRSLSSASTKILPPAGSSTSISRGNRHSSTSRNLSNSKFSSERLVYNPYGVSTPSTSLSSVSTSMKKDPDLGFYLHDGDSKIRMLPIPIVDPNEYLPDEMKEASIQLSDNFVFDDENKTIGWGGSCEVRKIRSKYRKKDVFALKKLNMIYNETPEKFYKRCSKEFIIAKQLSHHVHITNTFLLVKVPTTVYTTRGWGFVMELGLRDLFAMIQKSGWRSVALAEKFCIFKQVACGVKFCHDQGIAHRDLKPENVLLSPDGVCKLTDFGISDWYHTDPHDLSSPVKKCAGMIGSPPYAPPEVMFYDSKKHYDTELQQPYDPRALDCYGLGIILMTLVNNVIPFLESCSFDTGFRDYCDAYENFIRLHDRAFRNRGNYRPGPGMEYHLARNFKNGHASRVAWRLADPEAATRYTIDDLFEDPWFQGIETCVDANDKYVCKKPIIKTTTYENPRGFHIATDVAATTPTSNPFLKNRVPIRSMVDIAAHPSPTATVLASSPPPPPPATHVPAEALFTLRETPPPQLATLTLSEEPPATPAPSAPSAPSARVRGHSPHRVVHHHLNIVNSLVHSSSAASSQVPAST</sequence>
<gene>
    <name type="primary">PTK1</name>
    <name type="synonym">POT1</name>
    <name type="synonym">STK1</name>
    <name type="ordered locus">YKL198C</name>
    <name type="ORF">YKL199C</name>
</gene>
<proteinExistence type="evidence at protein level"/>
<name>PTK1_YEAST</name>
<reference key="1">
    <citation type="journal article" date="1994" name="Nature">
        <title>Complete DNA sequence of yeast chromosome XI.</title>
        <authorList>
            <person name="Dujon B."/>
            <person name="Alexandraki D."/>
            <person name="Andre B."/>
            <person name="Ansorge W."/>
            <person name="Baladron V."/>
            <person name="Ballesta J.P.G."/>
            <person name="Banrevi A."/>
            <person name="Bolle P.-A."/>
            <person name="Bolotin-Fukuhara M."/>
            <person name="Bossier P."/>
            <person name="Bou G."/>
            <person name="Boyer J."/>
            <person name="Buitrago M.J."/>
            <person name="Cheret G."/>
            <person name="Colleaux L."/>
            <person name="Daignan-Fornier B."/>
            <person name="del Rey F."/>
            <person name="Dion C."/>
            <person name="Domdey H."/>
            <person name="Duesterhoeft A."/>
            <person name="Duesterhus S."/>
            <person name="Entian K.-D."/>
            <person name="Erfle H."/>
            <person name="Esteban P.F."/>
            <person name="Feldmann H."/>
            <person name="Fernandes L."/>
            <person name="Fobo G.M."/>
            <person name="Fritz C."/>
            <person name="Fukuhara H."/>
            <person name="Gabel C."/>
            <person name="Gaillon L."/>
            <person name="Garcia-Cantalejo J.M."/>
            <person name="Garcia-Ramirez J.J."/>
            <person name="Gent M.E."/>
            <person name="Ghazvini M."/>
            <person name="Goffeau A."/>
            <person name="Gonzalez A."/>
            <person name="Grothues D."/>
            <person name="Guerreiro P."/>
            <person name="Hegemann J.H."/>
            <person name="Hewitt N."/>
            <person name="Hilger F."/>
            <person name="Hollenberg C.P."/>
            <person name="Horaitis O."/>
            <person name="Indge K.J."/>
            <person name="Jacquier A."/>
            <person name="James C.M."/>
            <person name="Jauniaux J.-C."/>
            <person name="Jimenez A."/>
            <person name="Keuchel H."/>
            <person name="Kirchrath L."/>
            <person name="Kleine K."/>
            <person name="Koetter P."/>
            <person name="Legrain P."/>
            <person name="Liebl S."/>
            <person name="Louis E.J."/>
            <person name="Maia e Silva A."/>
            <person name="Marck C."/>
            <person name="Monnier A.-L."/>
            <person name="Moestl D."/>
            <person name="Mueller S."/>
            <person name="Obermaier B."/>
            <person name="Oliver S.G."/>
            <person name="Pallier C."/>
            <person name="Pascolo S."/>
            <person name="Pfeiffer F."/>
            <person name="Philippsen P."/>
            <person name="Planta R.J."/>
            <person name="Pohl F.M."/>
            <person name="Pohl T.M."/>
            <person name="Poehlmann R."/>
            <person name="Portetelle D."/>
            <person name="Purnelle B."/>
            <person name="Puzos V."/>
            <person name="Ramezani Rad M."/>
            <person name="Rasmussen S.W."/>
            <person name="Remacha M.A."/>
            <person name="Revuelta J.L."/>
            <person name="Richard G.-F."/>
            <person name="Rieger M."/>
            <person name="Rodrigues-Pousada C."/>
            <person name="Rose M."/>
            <person name="Rupp T."/>
            <person name="Santos M.A."/>
            <person name="Schwager C."/>
            <person name="Sensen C."/>
            <person name="Skala J."/>
            <person name="Soares H."/>
            <person name="Sor F."/>
            <person name="Stegemann J."/>
            <person name="Tettelin H."/>
            <person name="Thierry A."/>
            <person name="Tzermia M."/>
            <person name="Urrestarazu L.A."/>
            <person name="van Dyck L."/>
            <person name="van Vliet-Reedijk J.C."/>
            <person name="Valens M."/>
            <person name="Vandenbol M."/>
            <person name="Vilela C."/>
            <person name="Vissers S."/>
            <person name="von Wettstein D."/>
            <person name="Voss H."/>
            <person name="Wiemann S."/>
            <person name="Xu G."/>
            <person name="Zimmermann J."/>
            <person name="Haasemann M."/>
            <person name="Becker I."/>
            <person name="Mewes H.-W."/>
        </authorList>
    </citation>
    <scope>NUCLEOTIDE SEQUENCE [LARGE SCALE GENOMIC DNA]</scope>
    <source>
        <strain>ATCC 204508 / S288c</strain>
    </source>
</reference>
<reference key="2">
    <citation type="journal article" date="2014" name="G3 (Bethesda)">
        <title>The reference genome sequence of Saccharomyces cerevisiae: Then and now.</title>
        <authorList>
            <person name="Engel S.R."/>
            <person name="Dietrich F.S."/>
            <person name="Fisk D.G."/>
            <person name="Binkley G."/>
            <person name="Balakrishnan R."/>
            <person name="Costanzo M.C."/>
            <person name="Dwight S.S."/>
            <person name="Hitz B.C."/>
            <person name="Karra K."/>
            <person name="Nash R.S."/>
            <person name="Weng S."/>
            <person name="Wong E.D."/>
            <person name="Lloyd P."/>
            <person name="Skrzypek M.S."/>
            <person name="Miyasato S.R."/>
            <person name="Simison M."/>
            <person name="Cherry J.M."/>
        </authorList>
    </citation>
    <scope>GENOME REANNOTATION</scope>
    <scope>SEQUENCE REVISION TO 241-244; 300; 356-375 AND 637-662</scope>
    <source>
        <strain>ATCC 204508 / S288c</strain>
    </source>
</reference>
<reference key="3">
    <citation type="journal article" date="1995" name="Biochem. Biophys. Res. Commun.">
        <title>Cloning of the gene encoding a putative serine/threonine protein kinase which enhances spermine uptake in Saccharomyces cerevisiae.</title>
        <authorList>
            <person name="Kakinuma Y."/>
            <person name="Maruyama T."/>
            <person name="Nozaki T."/>
            <person name="Wada Y."/>
            <person name="Ohsumi Y."/>
            <person name="Igarashi K."/>
        </authorList>
    </citation>
    <scope>NUCLEOTIDE SEQUENCE [GENOMIC DNA] OF 1-584</scope>
    <scope>CHARACTERIZATION</scope>
</reference>
<reference key="4">
    <citation type="journal article" date="1997" name="Mol. Cell. Biol.">
        <title>The STK2 gene, which encodes a putative Ser/Thr protein kinase, is required for high-affinity spermidine transport in Saccharomyces cerevisiae.</title>
        <authorList>
            <person name="Kaouass M."/>
            <person name="Audette M."/>
            <person name="Ramotar D."/>
            <person name="Verma S."/>
            <person name="de Montigny D."/>
            <person name="Gamache I."/>
            <person name="Torossian K."/>
            <person name="Poulin R."/>
        </authorList>
    </citation>
    <scope>CHARACTERIZATION</scope>
</reference>
<evidence type="ECO:0000255" key="1">
    <source>
        <dbReference type="PROSITE-ProRule" id="PRU00159"/>
    </source>
</evidence>
<evidence type="ECO:0000255" key="2">
    <source>
        <dbReference type="PROSITE-ProRule" id="PRU10027"/>
    </source>
</evidence>
<evidence type="ECO:0000256" key="3">
    <source>
        <dbReference type="SAM" id="MobiDB-lite"/>
    </source>
</evidence>
<evidence type="ECO:0000305" key="4"/>
<protein>
    <recommendedName>
        <fullName>Serine/threonine-protein kinase PTK1/STK1</fullName>
        <ecNumber>2.7.11.1</ecNumber>
    </recommendedName>
</protein>
<dbReference type="EC" id="2.7.11.1"/>
<dbReference type="EMBL" id="Z28198">
    <property type="protein sequence ID" value="CAA82043.1"/>
    <property type="status" value="ALT_FRAME"/>
    <property type="molecule type" value="Genomic_DNA"/>
</dbReference>
<dbReference type="EMBL" id="Z28198">
    <property type="protein sequence ID" value="CAA82042.1"/>
    <property type="status" value="ALT_FRAME"/>
    <property type="molecule type" value="Genomic_DNA"/>
</dbReference>
<dbReference type="EMBL" id="D63815">
    <property type="protein sequence ID" value="BAA09884.1"/>
    <property type="status" value="ALT_FRAME"/>
    <property type="molecule type" value="Genomic_DNA"/>
</dbReference>
<dbReference type="EMBL" id="BK006944">
    <property type="protein sequence ID" value="DAA08968.2"/>
    <property type="molecule type" value="Genomic_DNA"/>
</dbReference>
<dbReference type="PIR" id="S38035">
    <property type="entry name" value="S38035"/>
</dbReference>
<dbReference type="PIR" id="S38036">
    <property type="entry name" value="S38036"/>
</dbReference>
<dbReference type="RefSeq" id="NP_012723.3">
    <property type="nucleotide sequence ID" value="NM_001179764.2"/>
</dbReference>
<dbReference type="SMR" id="P36002"/>
<dbReference type="BioGRID" id="33922">
    <property type="interactions" value="107"/>
</dbReference>
<dbReference type="FunCoup" id="P36002">
    <property type="interactions" value="378"/>
</dbReference>
<dbReference type="IntAct" id="P36002">
    <property type="interactions" value="17"/>
</dbReference>
<dbReference type="MINT" id="P36002"/>
<dbReference type="STRING" id="4932.YKL198C"/>
<dbReference type="GlyGen" id="P36002">
    <property type="glycosylation" value="1 site"/>
</dbReference>
<dbReference type="iPTMnet" id="P36002"/>
<dbReference type="PaxDb" id="4932-YKL198C"/>
<dbReference type="PeptideAtlas" id="P36002"/>
<dbReference type="EnsemblFungi" id="YKL198C_mRNA">
    <property type="protein sequence ID" value="YKL198C"/>
    <property type="gene ID" value="YKL198C"/>
</dbReference>
<dbReference type="GeneID" id="853635"/>
<dbReference type="KEGG" id="sce:YKL198C"/>
<dbReference type="AGR" id="SGD:S000001681"/>
<dbReference type="SGD" id="S000001681">
    <property type="gene designation" value="PTK1"/>
</dbReference>
<dbReference type="VEuPathDB" id="FungiDB:YKL198C"/>
<dbReference type="eggNOG" id="KOG0583">
    <property type="taxonomic scope" value="Eukaryota"/>
</dbReference>
<dbReference type="GeneTree" id="ENSGT00940000176810"/>
<dbReference type="HOGENOM" id="CLU_009275_2_0_1"/>
<dbReference type="InParanoid" id="P36002"/>
<dbReference type="OMA" id="CVDANDK"/>
<dbReference type="OrthoDB" id="4062651at2759"/>
<dbReference type="BioCyc" id="YEAST:G3O-31960-MONOMER"/>
<dbReference type="BRENDA" id="2.7.11.1">
    <property type="organism ID" value="984"/>
</dbReference>
<dbReference type="BioGRID-ORCS" id="853635">
    <property type="hits" value="2 hits in 13 CRISPR screens"/>
</dbReference>
<dbReference type="PRO" id="PR:P36002"/>
<dbReference type="Proteomes" id="UP000002311">
    <property type="component" value="Chromosome XI"/>
</dbReference>
<dbReference type="RNAct" id="P36002">
    <property type="molecule type" value="protein"/>
</dbReference>
<dbReference type="GO" id="GO:0005737">
    <property type="term" value="C:cytoplasm"/>
    <property type="evidence" value="ECO:0000318"/>
    <property type="project" value="GO_Central"/>
</dbReference>
<dbReference type="GO" id="GO:0005634">
    <property type="term" value="C:nucleus"/>
    <property type="evidence" value="ECO:0000318"/>
    <property type="project" value="GO_Central"/>
</dbReference>
<dbReference type="GO" id="GO:0005524">
    <property type="term" value="F:ATP binding"/>
    <property type="evidence" value="ECO:0007669"/>
    <property type="project" value="UniProtKB-KW"/>
</dbReference>
<dbReference type="GO" id="GO:0004672">
    <property type="term" value="F:protein kinase activity"/>
    <property type="evidence" value="ECO:0000247"/>
    <property type="project" value="SGD"/>
</dbReference>
<dbReference type="GO" id="GO:0106310">
    <property type="term" value="F:protein serine kinase activity"/>
    <property type="evidence" value="ECO:0007669"/>
    <property type="project" value="RHEA"/>
</dbReference>
<dbReference type="GO" id="GO:0004674">
    <property type="term" value="F:protein serine/threonine kinase activity"/>
    <property type="evidence" value="ECO:0000318"/>
    <property type="project" value="GO_Central"/>
</dbReference>
<dbReference type="GO" id="GO:0000086">
    <property type="term" value="P:G2/M transition of mitotic cell cycle"/>
    <property type="evidence" value="ECO:0000318"/>
    <property type="project" value="GO_Central"/>
</dbReference>
<dbReference type="GO" id="GO:0000296">
    <property type="term" value="P:spermine transport"/>
    <property type="evidence" value="ECO:0000316"/>
    <property type="project" value="SGD"/>
</dbReference>
<dbReference type="FunFam" id="1.10.510.10:FF:000949">
    <property type="entry name" value="Serine/threonine-protein kinase PTK1/STK1"/>
    <property type="match status" value="1"/>
</dbReference>
<dbReference type="Gene3D" id="1.10.510.10">
    <property type="entry name" value="Transferase(Phosphotransferase) domain 1"/>
    <property type="match status" value="1"/>
</dbReference>
<dbReference type="InterPro" id="IPR011009">
    <property type="entry name" value="Kinase-like_dom_sf"/>
</dbReference>
<dbReference type="InterPro" id="IPR000719">
    <property type="entry name" value="Prot_kinase_dom"/>
</dbReference>
<dbReference type="InterPro" id="IPR008271">
    <property type="entry name" value="Ser/Thr_kinase_AS"/>
</dbReference>
<dbReference type="PANTHER" id="PTHR24346">
    <property type="entry name" value="MAP/MICROTUBULE AFFINITY-REGULATING KINASE"/>
    <property type="match status" value="1"/>
</dbReference>
<dbReference type="PANTHER" id="PTHR24346:SF76">
    <property type="entry name" value="NON-SPECIFIC SERINE_THREONINE PROTEIN KINASE"/>
    <property type="match status" value="1"/>
</dbReference>
<dbReference type="Pfam" id="PF00069">
    <property type="entry name" value="Pkinase"/>
    <property type="match status" value="1"/>
</dbReference>
<dbReference type="SMART" id="SM00220">
    <property type="entry name" value="S_TKc"/>
    <property type="match status" value="1"/>
</dbReference>
<dbReference type="SUPFAM" id="SSF56112">
    <property type="entry name" value="Protein kinase-like (PK-like)"/>
    <property type="match status" value="1"/>
</dbReference>
<dbReference type="PROSITE" id="PS50011">
    <property type="entry name" value="PROTEIN_KINASE_DOM"/>
    <property type="match status" value="1"/>
</dbReference>
<dbReference type="PROSITE" id="PS00108">
    <property type="entry name" value="PROTEIN_KINASE_ST"/>
    <property type="match status" value="1"/>
</dbReference>